<dbReference type="EC" id="3.1.3.11" evidence="1"/>
<dbReference type="EMBL" id="AE008923">
    <property type="protein sequence ID" value="AAM35016.1"/>
    <property type="molecule type" value="Genomic_DNA"/>
</dbReference>
<dbReference type="RefSeq" id="WP_003487947.1">
    <property type="nucleotide sequence ID" value="NC_003919.1"/>
</dbReference>
<dbReference type="SMR" id="Q8PR42"/>
<dbReference type="KEGG" id="xac:XAC0124"/>
<dbReference type="eggNOG" id="COG0158">
    <property type="taxonomic scope" value="Bacteria"/>
</dbReference>
<dbReference type="HOGENOM" id="CLU_039977_0_0_6"/>
<dbReference type="UniPathway" id="UPA00138"/>
<dbReference type="Proteomes" id="UP000000576">
    <property type="component" value="Chromosome"/>
</dbReference>
<dbReference type="GO" id="GO:0005829">
    <property type="term" value="C:cytosol"/>
    <property type="evidence" value="ECO:0007669"/>
    <property type="project" value="TreeGrafter"/>
</dbReference>
<dbReference type="GO" id="GO:0042132">
    <property type="term" value="F:fructose 1,6-bisphosphate 1-phosphatase activity"/>
    <property type="evidence" value="ECO:0007669"/>
    <property type="project" value="UniProtKB-UniRule"/>
</dbReference>
<dbReference type="GO" id="GO:0000287">
    <property type="term" value="F:magnesium ion binding"/>
    <property type="evidence" value="ECO:0007669"/>
    <property type="project" value="UniProtKB-UniRule"/>
</dbReference>
<dbReference type="GO" id="GO:0030388">
    <property type="term" value="P:fructose 1,6-bisphosphate metabolic process"/>
    <property type="evidence" value="ECO:0007669"/>
    <property type="project" value="TreeGrafter"/>
</dbReference>
<dbReference type="GO" id="GO:0006002">
    <property type="term" value="P:fructose 6-phosphate metabolic process"/>
    <property type="evidence" value="ECO:0007669"/>
    <property type="project" value="TreeGrafter"/>
</dbReference>
<dbReference type="GO" id="GO:0006000">
    <property type="term" value="P:fructose metabolic process"/>
    <property type="evidence" value="ECO:0007669"/>
    <property type="project" value="TreeGrafter"/>
</dbReference>
<dbReference type="GO" id="GO:0006094">
    <property type="term" value="P:gluconeogenesis"/>
    <property type="evidence" value="ECO:0007669"/>
    <property type="project" value="UniProtKB-UniRule"/>
</dbReference>
<dbReference type="GO" id="GO:0005986">
    <property type="term" value="P:sucrose biosynthetic process"/>
    <property type="evidence" value="ECO:0007669"/>
    <property type="project" value="TreeGrafter"/>
</dbReference>
<dbReference type="CDD" id="cd00354">
    <property type="entry name" value="FBPase"/>
    <property type="match status" value="1"/>
</dbReference>
<dbReference type="FunFam" id="3.30.540.10:FF:000006">
    <property type="entry name" value="Fructose-1,6-bisphosphatase class 1"/>
    <property type="match status" value="1"/>
</dbReference>
<dbReference type="FunFam" id="3.40.190.80:FF:000011">
    <property type="entry name" value="Fructose-1,6-bisphosphatase class 1"/>
    <property type="match status" value="1"/>
</dbReference>
<dbReference type="Gene3D" id="3.40.190.80">
    <property type="match status" value="1"/>
</dbReference>
<dbReference type="Gene3D" id="3.30.540.10">
    <property type="entry name" value="Fructose-1,6-Bisphosphatase, subunit A, domain 1"/>
    <property type="match status" value="1"/>
</dbReference>
<dbReference type="HAMAP" id="MF_01855">
    <property type="entry name" value="FBPase_class1"/>
    <property type="match status" value="1"/>
</dbReference>
<dbReference type="InterPro" id="IPR044015">
    <property type="entry name" value="FBPase_C_dom"/>
</dbReference>
<dbReference type="InterPro" id="IPR000146">
    <property type="entry name" value="FBPase_class-1"/>
</dbReference>
<dbReference type="InterPro" id="IPR033391">
    <property type="entry name" value="FBPase_N"/>
</dbReference>
<dbReference type="InterPro" id="IPR028343">
    <property type="entry name" value="FBPtase"/>
</dbReference>
<dbReference type="NCBIfam" id="NF006779">
    <property type="entry name" value="PRK09293.1-3"/>
    <property type="match status" value="1"/>
</dbReference>
<dbReference type="NCBIfam" id="NF006780">
    <property type="entry name" value="PRK09293.1-4"/>
    <property type="match status" value="1"/>
</dbReference>
<dbReference type="PANTHER" id="PTHR11556">
    <property type="entry name" value="FRUCTOSE-1,6-BISPHOSPHATASE-RELATED"/>
    <property type="match status" value="1"/>
</dbReference>
<dbReference type="PANTHER" id="PTHR11556:SF35">
    <property type="entry name" value="SEDOHEPTULOSE-1,7-BISPHOSPHATASE, CHLOROPLASTIC"/>
    <property type="match status" value="1"/>
</dbReference>
<dbReference type="Pfam" id="PF00316">
    <property type="entry name" value="FBPase"/>
    <property type="match status" value="1"/>
</dbReference>
<dbReference type="Pfam" id="PF18913">
    <property type="entry name" value="FBPase_C"/>
    <property type="match status" value="1"/>
</dbReference>
<dbReference type="PIRSF" id="PIRSF500210">
    <property type="entry name" value="FBPtase"/>
    <property type="match status" value="1"/>
</dbReference>
<dbReference type="PIRSF" id="PIRSF000904">
    <property type="entry name" value="FBPtase_SBPase"/>
    <property type="match status" value="1"/>
</dbReference>
<dbReference type="PRINTS" id="PR00115">
    <property type="entry name" value="F16BPHPHTASE"/>
</dbReference>
<dbReference type="SUPFAM" id="SSF56655">
    <property type="entry name" value="Carbohydrate phosphatase"/>
    <property type="match status" value="1"/>
</dbReference>
<proteinExistence type="inferred from homology"/>
<name>F16PA_XANAC</name>
<accession>Q8PR42</accession>
<gene>
    <name evidence="1" type="primary">fbp</name>
    <name type="ordered locus">XAC0124</name>
</gene>
<reference key="1">
    <citation type="journal article" date="2002" name="Nature">
        <title>Comparison of the genomes of two Xanthomonas pathogens with differing host specificities.</title>
        <authorList>
            <person name="da Silva A.C.R."/>
            <person name="Ferro J.A."/>
            <person name="Reinach F.C."/>
            <person name="Farah C.S."/>
            <person name="Furlan L.R."/>
            <person name="Quaggio R.B."/>
            <person name="Monteiro-Vitorello C.B."/>
            <person name="Van Sluys M.A."/>
            <person name="Almeida N.F. Jr."/>
            <person name="Alves L.M.C."/>
            <person name="do Amaral A.M."/>
            <person name="Bertolini M.C."/>
            <person name="Camargo L.E.A."/>
            <person name="Camarotte G."/>
            <person name="Cannavan F."/>
            <person name="Cardozo J."/>
            <person name="Chambergo F."/>
            <person name="Ciapina L.P."/>
            <person name="Cicarelli R.M.B."/>
            <person name="Coutinho L.L."/>
            <person name="Cursino-Santos J.R."/>
            <person name="El-Dorry H."/>
            <person name="Faria J.B."/>
            <person name="Ferreira A.J.S."/>
            <person name="Ferreira R.C.C."/>
            <person name="Ferro M.I.T."/>
            <person name="Formighieri E.F."/>
            <person name="Franco M.C."/>
            <person name="Greggio C.C."/>
            <person name="Gruber A."/>
            <person name="Katsuyama A.M."/>
            <person name="Kishi L.T."/>
            <person name="Leite R.P."/>
            <person name="Lemos E.G.M."/>
            <person name="Lemos M.V.F."/>
            <person name="Locali E.C."/>
            <person name="Machado M.A."/>
            <person name="Madeira A.M.B.N."/>
            <person name="Martinez-Rossi N.M."/>
            <person name="Martins E.C."/>
            <person name="Meidanis J."/>
            <person name="Menck C.F.M."/>
            <person name="Miyaki C.Y."/>
            <person name="Moon D.H."/>
            <person name="Moreira L.M."/>
            <person name="Novo M.T.M."/>
            <person name="Okura V.K."/>
            <person name="Oliveira M.C."/>
            <person name="Oliveira V.R."/>
            <person name="Pereira H.A."/>
            <person name="Rossi A."/>
            <person name="Sena J.A.D."/>
            <person name="Silva C."/>
            <person name="de Souza R.F."/>
            <person name="Spinola L.A.F."/>
            <person name="Takita M.A."/>
            <person name="Tamura R.E."/>
            <person name="Teixeira E.C."/>
            <person name="Tezza R.I.D."/>
            <person name="Trindade dos Santos M."/>
            <person name="Truffi D."/>
            <person name="Tsai S.M."/>
            <person name="White F.F."/>
            <person name="Setubal J.C."/>
            <person name="Kitajima J.P."/>
        </authorList>
    </citation>
    <scope>NUCLEOTIDE SEQUENCE [LARGE SCALE GENOMIC DNA]</scope>
    <source>
        <strain>306</strain>
    </source>
</reference>
<feature type="chain" id="PRO_0000364750" description="Fructose-1,6-bisphosphatase class 1">
    <location>
        <begin position="1"/>
        <end position="336"/>
    </location>
</feature>
<feature type="binding site" evidence="1">
    <location>
        <position position="90"/>
    </location>
    <ligand>
        <name>Mg(2+)</name>
        <dbReference type="ChEBI" id="CHEBI:18420"/>
        <label>1</label>
    </ligand>
</feature>
<feature type="binding site" evidence="1">
    <location>
        <position position="112"/>
    </location>
    <ligand>
        <name>Mg(2+)</name>
        <dbReference type="ChEBI" id="CHEBI:18420"/>
        <label>1</label>
    </ligand>
</feature>
<feature type="binding site" evidence="1">
    <location>
        <position position="112"/>
    </location>
    <ligand>
        <name>Mg(2+)</name>
        <dbReference type="ChEBI" id="CHEBI:18420"/>
        <label>2</label>
    </ligand>
</feature>
<feature type="binding site" evidence="1">
    <location>
        <position position="114"/>
    </location>
    <ligand>
        <name>Mg(2+)</name>
        <dbReference type="ChEBI" id="CHEBI:18420"/>
        <label>1</label>
    </ligand>
</feature>
<feature type="binding site" evidence="1">
    <location>
        <begin position="115"/>
        <end position="118"/>
    </location>
    <ligand>
        <name>substrate</name>
    </ligand>
</feature>
<feature type="binding site" evidence="1">
    <location>
        <position position="115"/>
    </location>
    <ligand>
        <name>Mg(2+)</name>
        <dbReference type="ChEBI" id="CHEBI:18420"/>
        <label>2</label>
    </ligand>
</feature>
<feature type="binding site" evidence="1">
    <location>
        <position position="207"/>
    </location>
    <ligand>
        <name>substrate</name>
    </ligand>
</feature>
<feature type="binding site" evidence="1">
    <location>
        <position position="273"/>
    </location>
    <ligand>
        <name>substrate</name>
    </ligand>
</feature>
<feature type="binding site" evidence="1">
    <location>
        <position position="279"/>
    </location>
    <ligand>
        <name>Mg(2+)</name>
        <dbReference type="ChEBI" id="CHEBI:18420"/>
        <label>2</label>
    </ligand>
</feature>
<protein>
    <recommendedName>
        <fullName evidence="1">Fructose-1,6-bisphosphatase class 1</fullName>
        <shortName evidence="1">FBPase class 1</shortName>
        <ecNumber evidence="1">3.1.3.11</ecNumber>
    </recommendedName>
    <alternativeName>
        <fullName evidence="1">D-fructose-1,6-bisphosphate 1-phosphohydrolase class 1</fullName>
    </alternativeName>
</protein>
<keyword id="KW-0119">Carbohydrate metabolism</keyword>
<keyword id="KW-0963">Cytoplasm</keyword>
<keyword id="KW-0378">Hydrolase</keyword>
<keyword id="KW-0460">Magnesium</keyword>
<keyword id="KW-0479">Metal-binding</keyword>
<evidence type="ECO:0000255" key="1">
    <source>
        <dbReference type="HAMAP-Rule" id="MF_01855"/>
    </source>
</evidence>
<organism>
    <name type="scientific">Xanthomonas axonopodis pv. citri (strain 306)</name>
    <dbReference type="NCBI Taxonomy" id="190486"/>
    <lineage>
        <taxon>Bacteria</taxon>
        <taxon>Pseudomonadati</taxon>
        <taxon>Pseudomonadota</taxon>
        <taxon>Gammaproteobacteria</taxon>
        <taxon>Lysobacterales</taxon>
        <taxon>Lysobacteraceae</taxon>
        <taxon>Xanthomonas</taxon>
    </lineage>
</organism>
<sequence>MSRPSLTRFLIEEQHAGRIDAELRQLITIVSRACKRISIAVSKGALGGVLGDAGTGNVQGEAQKKLDVLSNDILLEANAWGGHLAACASEEMDHSQPVPDQYPSGDFLLLFDPLDGSSNIDVNVSVGTIFSVLRAPKGTEKPGDEHFLQPGTQQVAAGYCIYGPSTMLVLTLGHGTHAFTLEREEGSFLLTQANMRVPEDTAEYAINMSNQRHWEPAMQAYVGDLLAGKDGARGKDFNMRWIASMVADVHRILTRGGIFIYPWDKKDPSKPGKLRLMYEANPMSMLVEQAGGAATTGRERILDIQPTQLHQRVPVFLGSKNEVAEATRYHLDADKA</sequence>
<comment type="catalytic activity">
    <reaction evidence="1">
        <text>beta-D-fructose 1,6-bisphosphate + H2O = beta-D-fructose 6-phosphate + phosphate</text>
        <dbReference type="Rhea" id="RHEA:11064"/>
        <dbReference type="ChEBI" id="CHEBI:15377"/>
        <dbReference type="ChEBI" id="CHEBI:32966"/>
        <dbReference type="ChEBI" id="CHEBI:43474"/>
        <dbReference type="ChEBI" id="CHEBI:57634"/>
        <dbReference type="EC" id="3.1.3.11"/>
    </reaction>
</comment>
<comment type="cofactor">
    <cofactor evidence="1">
        <name>Mg(2+)</name>
        <dbReference type="ChEBI" id="CHEBI:18420"/>
    </cofactor>
    <text evidence="1">Binds 2 magnesium ions per subunit.</text>
</comment>
<comment type="pathway">
    <text evidence="1">Carbohydrate biosynthesis; gluconeogenesis.</text>
</comment>
<comment type="subunit">
    <text evidence="1">Homotetramer.</text>
</comment>
<comment type="subcellular location">
    <subcellularLocation>
        <location evidence="1">Cytoplasm</location>
    </subcellularLocation>
</comment>
<comment type="similarity">
    <text evidence="1">Belongs to the FBPase class 1 family.</text>
</comment>